<feature type="chain" id="PRO_0000096452" description="Meiotic expression up-regulated protein 25">
    <location>
        <begin position="1"/>
        <end position="622"/>
    </location>
</feature>
<feature type="sequence conflict" description="In Ref. 2; BAA12200." evidence="1" ref="2">
    <original>T</original>
    <variation>A</variation>
    <location>
        <position position="20"/>
    </location>
</feature>
<feature type="sequence conflict" description="In Ref. 2; BAA12200." evidence="1" ref="2">
    <original>E</original>
    <variation>G</variation>
    <location>
        <position position="39"/>
    </location>
</feature>
<feature type="sequence conflict" description="In Ref. 2; BAA12200." evidence="1" ref="2">
    <original>E</original>
    <variation>G</variation>
    <location>
        <position position="64"/>
    </location>
</feature>
<feature type="sequence conflict" description="In Ref. 2; BAA12200." evidence="1" ref="2">
    <original>V</original>
    <variation>A</variation>
    <location>
        <position position="116"/>
    </location>
</feature>
<feature type="sequence conflict" description="In Ref. 2; BAA12202." evidence="1" ref="2">
    <original>V</original>
    <variation>A</variation>
    <location>
        <position position="577"/>
    </location>
</feature>
<feature type="sequence conflict" description="In Ref. 2; BAA12202." evidence="1" ref="2">
    <original>NKVAFDDNEALLYQV</original>
    <variation>EQSRI</variation>
    <location>
        <begin position="608"/>
        <end position="622"/>
    </location>
</feature>
<name>MEU25_SCHPO</name>
<sequence>MSSIFGENIVSDSIVNMELTNPDNTTTMHPIYETNIEKEVQQEFSDNVSEKETIDSTKSKISLENIQQEMGALAKKIFHKLGVKATDLGFSNEHDDSQDSLQTLAPSPSYVPLLKVIGSSEEVNSNLVLTDLETNTDGYDPKFLISVRKFLMGSPNSGFVVKHEKRLPDGPRVLALRAISSVDEENRKERLSPDSDPVETESVYVDNGELSNQKVETVEISEKEQNDDPAGYSQYLLEFKKSKCQKKVPTLESIEENEGTEPHDNLTFMTDLGTPYYSLGNEFERKQILDEYGLLANDENLVIGHTLRAEYCFMFDESDILQLRNYEHTEKELSVLQFKGVSSRWDFRCCREERLLRLLLCFDSEHTGQSFIQLNDPENENEKEEQNSISIRELSYFSTKLISLILPKEAHKQRYIMLSSLAKTREADFFWSEEEKTNYTNELLSNPCKFLCELDHFDSFPHQQQDLLWKYLAEFSASLELDPNLALWKKQVIFSKIGHPKLLVMPISSFHCVQRFPDLVCVQTSTAETFLSVDRELTTYDLNTIKLLNTAPSRTAQNWLFIMHHLEIVGYLFPHLVHLDKQYSLLDYAKSVEHIPELGTVQRKGFLNKVAFDDNEALLYQV</sequence>
<accession>Q9P6S4</accession>
<accession>P78950</accession>
<accession>P78952</accession>
<accession>Q96WS0</accession>
<reference key="1">
    <citation type="journal article" date="2002" name="Nature">
        <title>The genome sequence of Schizosaccharomyces pombe.</title>
        <authorList>
            <person name="Wood V."/>
            <person name="Gwilliam R."/>
            <person name="Rajandream M.A."/>
            <person name="Lyne M.H."/>
            <person name="Lyne R."/>
            <person name="Stewart A."/>
            <person name="Sgouros J.G."/>
            <person name="Peat N."/>
            <person name="Hayles J."/>
            <person name="Baker S.G."/>
            <person name="Basham D."/>
            <person name="Bowman S."/>
            <person name="Brooks K."/>
            <person name="Brown D."/>
            <person name="Brown S."/>
            <person name="Chillingworth T."/>
            <person name="Churcher C.M."/>
            <person name="Collins M."/>
            <person name="Connor R."/>
            <person name="Cronin A."/>
            <person name="Davis P."/>
            <person name="Feltwell T."/>
            <person name="Fraser A."/>
            <person name="Gentles S."/>
            <person name="Goble A."/>
            <person name="Hamlin N."/>
            <person name="Harris D.E."/>
            <person name="Hidalgo J."/>
            <person name="Hodgson G."/>
            <person name="Holroyd S."/>
            <person name="Hornsby T."/>
            <person name="Howarth S."/>
            <person name="Huckle E.J."/>
            <person name="Hunt S."/>
            <person name="Jagels K."/>
            <person name="James K.D."/>
            <person name="Jones L."/>
            <person name="Jones M."/>
            <person name="Leather S."/>
            <person name="McDonald S."/>
            <person name="McLean J."/>
            <person name="Mooney P."/>
            <person name="Moule S."/>
            <person name="Mungall K.L."/>
            <person name="Murphy L.D."/>
            <person name="Niblett D."/>
            <person name="Odell C."/>
            <person name="Oliver K."/>
            <person name="O'Neil S."/>
            <person name="Pearson D."/>
            <person name="Quail M.A."/>
            <person name="Rabbinowitsch E."/>
            <person name="Rutherford K.M."/>
            <person name="Rutter S."/>
            <person name="Saunders D."/>
            <person name="Seeger K."/>
            <person name="Sharp S."/>
            <person name="Skelton J."/>
            <person name="Simmonds M.N."/>
            <person name="Squares R."/>
            <person name="Squares S."/>
            <person name="Stevens K."/>
            <person name="Taylor K."/>
            <person name="Taylor R.G."/>
            <person name="Tivey A."/>
            <person name="Walsh S.V."/>
            <person name="Warren T."/>
            <person name="Whitehead S."/>
            <person name="Woodward J.R."/>
            <person name="Volckaert G."/>
            <person name="Aert R."/>
            <person name="Robben J."/>
            <person name="Grymonprez B."/>
            <person name="Weltjens I."/>
            <person name="Vanstreels E."/>
            <person name="Rieger M."/>
            <person name="Schaefer M."/>
            <person name="Mueller-Auer S."/>
            <person name="Gabel C."/>
            <person name="Fuchs M."/>
            <person name="Duesterhoeft A."/>
            <person name="Fritzc C."/>
            <person name="Holzer E."/>
            <person name="Moestl D."/>
            <person name="Hilbert H."/>
            <person name="Borzym K."/>
            <person name="Langer I."/>
            <person name="Beck A."/>
            <person name="Lehrach H."/>
            <person name="Reinhardt R."/>
            <person name="Pohl T.M."/>
            <person name="Eger P."/>
            <person name="Zimmermann W."/>
            <person name="Wedler H."/>
            <person name="Wambutt R."/>
            <person name="Purnelle B."/>
            <person name="Goffeau A."/>
            <person name="Cadieu E."/>
            <person name="Dreano S."/>
            <person name="Gloux S."/>
            <person name="Lelaure V."/>
            <person name="Mottier S."/>
            <person name="Galibert F."/>
            <person name="Aves S.J."/>
            <person name="Xiang Z."/>
            <person name="Hunt C."/>
            <person name="Moore K."/>
            <person name="Hurst S.M."/>
            <person name="Lucas M."/>
            <person name="Rochet M."/>
            <person name="Gaillardin C."/>
            <person name="Tallada V.A."/>
            <person name="Garzon A."/>
            <person name="Thode G."/>
            <person name="Daga R.R."/>
            <person name="Cruzado L."/>
            <person name="Jimenez J."/>
            <person name="Sanchez M."/>
            <person name="del Rey F."/>
            <person name="Benito J."/>
            <person name="Dominguez A."/>
            <person name="Revuelta J.L."/>
            <person name="Moreno S."/>
            <person name="Armstrong J."/>
            <person name="Forsburg S.L."/>
            <person name="Cerutti L."/>
            <person name="Lowe T."/>
            <person name="McCombie W.R."/>
            <person name="Paulsen I."/>
            <person name="Potashkin J."/>
            <person name="Shpakovski G.V."/>
            <person name="Ussery D."/>
            <person name="Barrell B.G."/>
            <person name="Nurse P."/>
        </authorList>
    </citation>
    <scope>NUCLEOTIDE SEQUENCE [LARGE SCALE GENOMIC DNA]</scope>
    <source>
        <strain>972 / ATCC 24843</strain>
    </source>
</reference>
<reference key="2">
    <citation type="submission" date="1996-03" db="EMBL/GenBank/DDBJ databases">
        <title>S.pombe chromosome II cosmid 1228 sequence.</title>
        <authorList>
            <person name="Kohnosu A."/>
            <person name="Niwa O."/>
            <person name="Yano M."/>
            <person name="Saitoh S."/>
            <person name="Katayama T."/>
            <person name="Nagao K."/>
            <person name="Yanagida M."/>
        </authorList>
    </citation>
    <scope>NUCLEOTIDE SEQUENCE [GENOMIC DNA] OF 1-236 AND 417-622</scope>
    <source>
        <strain>972 / ATCC 24843</strain>
    </source>
</reference>
<reference key="3">
    <citation type="journal article" date="2001" name="Nucleic Acids Res.">
        <title>Comprehensive isolation of meiosis-specific genes identifies novel proteins and unusual non-coding transcripts in Schizosaccharomyces pombe.</title>
        <authorList>
            <person name="Watanabe T."/>
            <person name="Miyashita K."/>
            <person name="Saito T.T."/>
            <person name="Yoneki T."/>
            <person name="Kakihara Y."/>
            <person name="Nabeshima K."/>
            <person name="Kishi Y.A."/>
            <person name="Shimoda C."/>
            <person name="Nojima H."/>
        </authorList>
    </citation>
    <scope>NUCLEOTIDE SEQUENCE [MRNA] OF 339-606</scope>
    <source>
        <strain>CD16-1</strain>
    </source>
</reference>
<gene>
    <name type="primary">meu25</name>
    <name type="ORF">SPBC27.03</name>
</gene>
<protein>
    <recommendedName>
        <fullName>Meiotic expression up-regulated protein 25</fullName>
    </recommendedName>
</protein>
<evidence type="ECO:0000305" key="1"/>
<proteinExistence type="evidence at transcript level"/>
<keyword id="KW-0469">Meiosis</keyword>
<keyword id="KW-1185">Reference proteome</keyword>
<organism>
    <name type="scientific">Schizosaccharomyces pombe (strain 972 / ATCC 24843)</name>
    <name type="common">Fission yeast</name>
    <dbReference type="NCBI Taxonomy" id="284812"/>
    <lineage>
        <taxon>Eukaryota</taxon>
        <taxon>Fungi</taxon>
        <taxon>Dikarya</taxon>
        <taxon>Ascomycota</taxon>
        <taxon>Taphrinomycotina</taxon>
        <taxon>Schizosaccharomycetes</taxon>
        <taxon>Schizosaccharomycetales</taxon>
        <taxon>Schizosaccharomycetaceae</taxon>
        <taxon>Schizosaccharomyces</taxon>
    </lineage>
</organism>
<dbReference type="EMBL" id="CU329671">
    <property type="protein sequence ID" value="CAB89003.1"/>
    <property type="molecule type" value="Genomic_DNA"/>
</dbReference>
<dbReference type="EMBL" id="D83993">
    <property type="protein sequence ID" value="BAA12200.1"/>
    <property type="molecule type" value="Genomic_DNA"/>
</dbReference>
<dbReference type="EMBL" id="D83993">
    <property type="protein sequence ID" value="BAA12202.1"/>
    <property type="molecule type" value="Genomic_DNA"/>
</dbReference>
<dbReference type="EMBL" id="AB054309">
    <property type="protein sequence ID" value="BAB60876.1"/>
    <property type="molecule type" value="mRNA"/>
</dbReference>
<dbReference type="RefSeq" id="NP_595658.1">
    <property type="nucleotide sequence ID" value="NM_001021552.2"/>
</dbReference>
<dbReference type="BioGRID" id="276982">
    <property type="interactions" value="1"/>
</dbReference>
<dbReference type="iPTMnet" id="Q9P6S4"/>
<dbReference type="PaxDb" id="4896-SPBC27.03.1"/>
<dbReference type="EnsemblFungi" id="SPBC27.03.1">
    <property type="protein sequence ID" value="SPBC27.03.1:pep"/>
    <property type="gene ID" value="SPBC27.03"/>
</dbReference>
<dbReference type="GeneID" id="2540454"/>
<dbReference type="KEGG" id="spo:2540454"/>
<dbReference type="PomBase" id="SPBC27.03">
    <property type="gene designation" value="meu25"/>
</dbReference>
<dbReference type="VEuPathDB" id="FungiDB:SPBC27.03"/>
<dbReference type="HOGENOM" id="CLU_418652_0_0_1"/>
<dbReference type="InParanoid" id="Q9P6S4"/>
<dbReference type="OMA" id="QVQETND"/>
<dbReference type="PRO" id="PR:Q9P6S4"/>
<dbReference type="Proteomes" id="UP000002485">
    <property type="component" value="Chromosome II"/>
</dbReference>
<dbReference type="GO" id="GO:0005829">
    <property type="term" value="C:cytosol"/>
    <property type="evidence" value="ECO:0007005"/>
    <property type="project" value="PomBase"/>
</dbReference>
<dbReference type="GO" id="GO:0051321">
    <property type="term" value="P:meiotic cell cycle"/>
    <property type="evidence" value="ECO:0007669"/>
    <property type="project" value="UniProtKB-KW"/>
</dbReference>